<name>GSHB_MACFA</name>
<gene>
    <name type="primary">GSS</name>
    <name type="ORF">QccE-14611</name>
</gene>
<organism>
    <name type="scientific">Macaca fascicularis</name>
    <name type="common">Crab-eating macaque</name>
    <name type="synonym">Cynomolgus monkey</name>
    <dbReference type="NCBI Taxonomy" id="9541"/>
    <lineage>
        <taxon>Eukaryota</taxon>
        <taxon>Metazoa</taxon>
        <taxon>Chordata</taxon>
        <taxon>Craniata</taxon>
        <taxon>Vertebrata</taxon>
        <taxon>Euteleostomi</taxon>
        <taxon>Mammalia</taxon>
        <taxon>Eutheria</taxon>
        <taxon>Euarchontoglires</taxon>
        <taxon>Primates</taxon>
        <taxon>Haplorrhini</taxon>
        <taxon>Catarrhini</taxon>
        <taxon>Cercopithecidae</taxon>
        <taxon>Cercopithecinae</taxon>
        <taxon>Macaca</taxon>
    </lineage>
</organism>
<proteinExistence type="evidence at transcript level"/>
<protein>
    <recommendedName>
        <fullName evidence="2">Glutathione synthetase</fullName>
        <shortName>GSH synthetase</shortName>
        <shortName>GSH-S</shortName>
        <ecNumber evidence="2">6.3.2.3</ecNumber>
    </recommendedName>
    <alternativeName>
        <fullName>Glutathione synthase</fullName>
    </alternativeName>
</protein>
<accession>Q8HXX5</accession>
<evidence type="ECO:0000250" key="1"/>
<evidence type="ECO:0000250" key="2">
    <source>
        <dbReference type="UniProtKB" id="P48637"/>
    </source>
</evidence>
<evidence type="ECO:0000305" key="3"/>
<feature type="initiator methionine" description="Removed" evidence="2">
    <location>
        <position position="1"/>
    </location>
</feature>
<feature type="chain" id="PRO_0000211261" description="Glutathione synthetase">
    <location>
        <begin position="2"/>
        <end position="474"/>
    </location>
</feature>
<feature type="binding site" evidence="1">
    <location>
        <position position="125"/>
    </location>
    <ligand>
        <name>substrate</name>
    </ligand>
</feature>
<feature type="binding site" evidence="1">
    <location>
        <position position="144"/>
    </location>
    <ligand>
        <name>ATP</name>
        <dbReference type="ChEBI" id="CHEBI:30616"/>
    </ligand>
</feature>
<feature type="binding site" evidence="1">
    <location>
        <position position="144"/>
    </location>
    <ligand>
        <name>Mg(2+)</name>
        <dbReference type="ChEBI" id="CHEBI:18420"/>
    </ligand>
</feature>
<feature type="binding site" evidence="1">
    <location>
        <position position="146"/>
    </location>
    <ligand>
        <name>Mg(2+)</name>
        <dbReference type="ChEBI" id="CHEBI:18420"/>
    </ligand>
</feature>
<feature type="binding site" evidence="1">
    <location>
        <begin position="148"/>
        <end position="151"/>
    </location>
    <ligand>
        <name>substrate</name>
    </ligand>
</feature>
<feature type="binding site" evidence="1">
    <location>
        <begin position="214"/>
        <end position="216"/>
    </location>
    <ligand>
        <name>substrate</name>
    </ligand>
</feature>
<feature type="binding site" evidence="1">
    <location>
        <position position="220"/>
    </location>
    <ligand>
        <name>substrate</name>
    </ligand>
</feature>
<feature type="binding site" evidence="1">
    <location>
        <begin position="267"/>
        <end position="270"/>
    </location>
    <ligand>
        <name>substrate</name>
    </ligand>
</feature>
<feature type="binding site" evidence="1">
    <location>
        <position position="305"/>
    </location>
    <ligand>
        <name>ATP</name>
        <dbReference type="ChEBI" id="CHEBI:30616"/>
    </ligand>
</feature>
<feature type="binding site" evidence="1">
    <location>
        <begin position="364"/>
        <end position="373"/>
    </location>
    <ligand>
        <name>ATP</name>
        <dbReference type="ChEBI" id="CHEBI:30616"/>
    </ligand>
</feature>
<feature type="binding site" evidence="1">
    <location>
        <position position="368"/>
    </location>
    <ligand>
        <name>Mg(2+)</name>
        <dbReference type="ChEBI" id="CHEBI:18420"/>
    </ligand>
</feature>
<feature type="binding site" evidence="1">
    <location>
        <position position="375"/>
    </location>
    <ligand>
        <name>ATP</name>
        <dbReference type="ChEBI" id="CHEBI:30616"/>
    </ligand>
</feature>
<feature type="binding site" evidence="1">
    <location>
        <begin position="398"/>
        <end position="401"/>
    </location>
    <ligand>
        <name>ATP</name>
        <dbReference type="ChEBI" id="CHEBI:30616"/>
    </ligand>
</feature>
<feature type="binding site" evidence="1">
    <location>
        <position position="425"/>
    </location>
    <ligand>
        <name>ATP</name>
        <dbReference type="ChEBI" id="CHEBI:30616"/>
    </ligand>
</feature>
<feature type="binding site" evidence="1">
    <location>
        <position position="450"/>
    </location>
    <ligand>
        <name>substrate</name>
    </ligand>
</feature>
<feature type="binding site" evidence="1">
    <location>
        <position position="452"/>
    </location>
    <ligand>
        <name>ATP</name>
        <dbReference type="ChEBI" id="CHEBI:30616"/>
    </ligand>
</feature>
<feature type="binding site" evidence="1">
    <location>
        <position position="458"/>
    </location>
    <ligand>
        <name>ATP</name>
        <dbReference type="ChEBI" id="CHEBI:30616"/>
    </ligand>
</feature>
<feature type="binding site" evidence="1">
    <location>
        <begin position="461"/>
        <end position="462"/>
    </location>
    <ligand>
        <name>substrate</name>
    </ligand>
</feature>
<feature type="modified residue" description="N-acetylalanine" evidence="2">
    <location>
        <position position="2"/>
    </location>
</feature>
<feature type="modified residue" description="Phosphoserine" evidence="2">
    <location>
        <position position="415"/>
    </location>
</feature>
<keyword id="KW-0007">Acetylation</keyword>
<keyword id="KW-0067">ATP-binding</keyword>
<keyword id="KW-0317">Glutathione biosynthesis</keyword>
<keyword id="KW-0436">Ligase</keyword>
<keyword id="KW-0460">Magnesium</keyword>
<keyword id="KW-0479">Metal-binding</keyword>
<keyword id="KW-0547">Nucleotide-binding</keyword>
<keyword id="KW-0597">Phosphoprotein</keyword>
<keyword id="KW-1185">Reference proteome</keyword>
<sequence>MATNWGSLLQNEQQLEELARQAVDRALAEGVLLRTSQEPTSSEVVSYAPFTLFPSLVPSALLEQAYAVQMDFNLLVDAVNQNAAFLEQTLSSTIEQDDFTARLFDIHKQVLKEGIAQTVFLGLNRSDYMFQRSTDGSPALKQIEINTISASFGGLASRTPAVHRHVLSVLSKTKEAGKILSNNPSKGLALGIAKAWELYGSTNALVLLIAQEKERNIFDQRAIENELLARNIHVIRRTFEDISEKGSLDQDRRLFVDGQEIAVVYFRDGYMPRQYSLQNWEARLLLERSCAAKCPDIATQLAGTKKVQQELSRPGMLEMLLPGQPEAVARLRATFAGLYSLDMGEEGDQAIAKALAAPSRFVLKPQREGGGNNLYGEEMVQALKQLKDSEERASYILMEKTEPEPFENCLLRPGSPAQVVQCISELGIFGVYVRHEKTLVMNKHVGHLLRTKAIEHADGGVAAGVAVLDNPYPV</sequence>
<reference key="1">
    <citation type="submission" date="2002-04" db="EMBL/GenBank/DDBJ databases">
        <title>Isolation and characterization of cDNA for macaque neurological disease genes.</title>
        <authorList>
            <person name="Kusuda J."/>
            <person name="Osada N."/>
            <person name="Hida M."/>
            <person name="Sugano S."/>
            <person name="Hashimoto K."/>
        </authorList>
    </citation>
    <scope>NUCLEOTIDE SEQUENCE [LARGE SCALE MRNA]</scope>
    <source>
        <tissue>Brain cortex</tissue>
    </source>
</reference>
<comment type="function">
    <text evidence="2">Catalyzes the production of glutathione from gamma-glutamylcysteine and glycine in an ATP-dependent manner. Glutathione (gamma-glutamylcysteinylglycine, GSH) is the most abundant intracellular thiol in living aerobic cells and is required for numerous processes including the protection of cells against oxidative damage, amino acid transport, the detoxification of foreign compounds, the maintenance of protein sulfhydryl groups in a reduced state and acts as a cofactor for a number of enzymes.</text>
</comment>
<comment type="catalytic activity">
    <reaction evidence="2">
        <text>gamma-L-glutamyl-L-cysteine + glycine + ATP = glutathione + ADP + phosphate + H(+)</text>
        <dbReference type="Rhea" id="RHEA:13557"/>
        <dbReference type="ChEBI" id="CHEBI:15378"/>
        <dbReference type="ChEBI" id="CHEBI:30616"/>
        <dbReference type="ChEBI" id="CHEBI:43474"/>
        <dbReference type="ChEBI" id="CHEBI:57305"/>
        <dbReference type="ChEBI" id="CHEBI:57925"/>
        <dbReference type="ChEBI" id="CHEBI:58173"/>
        <dbReference type="ChEBI" id="CHEBI:456216"/>
        <dbReference type="EC" id="6.3.2.3"/>
    </reaction>
    <physiologicalReaction direction="left-to-right" evidence="2">
        <dbReference type="Rhea" id="RHEA:13558"/>
    </physiologicalReaction>
</comment>
<comment type="cofactor">
    <cofactor evidence="2">
        <name>Mg(2+)</name>
        <dbReference type="ChEBI" id="CHEBI:18420"/>
    </cofactor>
    <text evidence="2">Binds 1 Mg(2+) ion per subunit.</text>
</comment>
<comment type="pathway">
    <text evidence="2">Sulfur metabolism; glutathione biosynthesis; glutathione from L-cysteine and L-glutamate: step 2/2.</text>
</comment>
<comment type="subunit">
    <text evidence="2">Homodimer.</text>
</comment>
<comment type="similarity">
    <text evidence="3">Belongs to the eukaryotic GSH synthase family.</text>
</comment>
<dbReference type="EC" id="6.3.2.3" evidence="2"/>
<dbReference type="EMBL" id="AB083314">
    <property type="protein sequence ID" value="BAC20593.1"/>
    <property type="molecule type" value="mRNA"/>
</dbReference>
<dbReference type="RefSeq" id="NP_001270338.1">
    <property type="nucleotide sequence ID" value="NM_001283409.1"/>
</dbReference>
<dbReference type="SMR" id="Q8HXX5"/>
<dbReference type="STRING" id="9541.ENSMFAP00000030386"/>
<dbReference type="eggNOG" id="KOG0021">
    <property type="taxonomic scope" value="Eukaryota"/>
</dbReference>
<dbReference type="UniPathway" id="UPA00142">
    <property type="reaction ID" value="UER00210"/>
</dbReference>
<dbReference type="Proteomes" id="UP000233100">
    <property type="component" value="Unplaced"/>
</dbReference>
<dbReference type="GO" id="GO:0005829">
    <property type="term" value="C:cytosol"/>
    <property type="evidence" value="ECO:0007669"/>
    <property type="project" value="TreeGrafter"/>
</dbReference>
<dbReference type="GO" id="GO:0005524">
    <property type="term" value="F:ATP binding"/>
    <property type="evidence" value="ECO:0000250"/>
    <property type="project" value="UniProtKB"/>
</dbReference>
<dbReference type="GO" id="GO:0043295">
    <property type="term" value="F:glutathione binding"/>
    <property type="evidence" value="ECO:0000250"/>
    <property type="project" value="UniProtKB"/>
</dbReference>
<dbReference type="GO" id="GO:0004363">
    <property type="term" value="F:glutathione synthase activity"/>
    <property type="evidence" value="ECO:0007669"/>
    <property type="project" value="UniProtKB-EC"/>
</dbReference>
<dbReference type="GO" id="GO:0000287">
    <property type="term" value="F:magnesium ion binding"/>
    <property type="evidence" value="ECO:0000250"/>
    <property type="project" value="UniProtKB"/>
</dbReference>
<dbReference type="GO" id="GO:0042803">
    <property type="term" value="F:protein homodimerization activity"/>
    <property type="evidence" value="ECO:0000250"/>
    <property type="project" value="UniProtKB"/>
</dbReference>
<dbReference type="CDD" id="cd00228">
    <property type="entry name" value="eu-GS"/>
    <property type="match status" value="1"/>
</dbReference>
<dbReference type="FunFam" id="3.30.1490.50:FF:000001">
    <property type="entry name" value="Glutathione synthetase"/>
    <property type="match status" value="1"/>
</dbReference>
<dbReference type="FunFam" id="3.30.1490.80:FF:000004">
    <property type="entry name" value="Glutathione synthetase"/>
    <property type="match status" value="1"/>
</dbReference>
<dbReference type="FunFam" id="3.40.50.1760:FF:000003">
    <property type="entry name" value="Glutathione synthetase"/>
    <property type="match status" value="1"/>
</dbReference>
<dbReference type="Gene3D" id="3.30.1490.50">
    <property type="match status" value="1"/>
</dbReference>
<dbReference type="Gene3D" id="3.30.1490.80">
    <property type="match status" value="1"/>
</dbReference>
<dbReference type="Gene3D" id="3.30.470.20">
    <property type="entry name" value="ATP-grasp fold, B domain"/>
    <property type="match status" value="1"/>
</dbReference>
<dbReference type="Gene3D" id="3.40.50.1760">
    <property type="entry name" value="Glutathione synthase, substrate-binding domain superfamily, eukaryotic"/>
    <property type="match status" value="1"/>
</dbReference>
<dbReference type="Gene3D" id="1.10.1080.10">
    <property type="entry name" value="Glutathione Synthetase, Chain A, domain 3"/>
    <property type="match status" value="1"/>
</dbReference>
<dbReference type="InterPro" id="IPR005615">
    <property type="entry name" value="Glutathione_synthase"/>
</dbReference>
<dbReference type="InterPro" id="IPR014042">
    <property type="entry name" value="Glutathione_synthase_a-hlx"/>
</dbReference>
<dbReference type="InterPro" id="IPR014709">
    <property type="entry name" value="Glutathione_synthase_C_euk"/>
</dbReference>
<dbReference type="InterPro" id="IPR014049">
    <property type="entry name" value="Glutathione_synthase_N_euk"/>
</dbReference>
<dbReference type="InterPro" id="IPR037013">
    <property type="entry name" value="GSH-S_sub-bd_sf"/>
</dbReference>
<dbReference type="InterPro" id="IPR004887">
    <property type="entry name" value="GSH_synth_subst-bd"/>
</dbReference>
<dbReference type="InterPro" id="IPR016185">
    <property type="entry name" value="PreATP-grasp_dom_sf"/>
</dbReference>
<dbReference type="NCBIfam" id="TIGR01986">
    <property type="entry name" value="glut_syn_euk"/>
    <property type="match status" value="1"/>
</dbReference>
<dbReference type="PANTHER" id="PTHR11130">
    <property type="entry name" value="GLUTATHIONE SYNTHETASE"/>
    <property type="match status" value="1"/>
</dbReference>
<dbReference type="PANTHER" id="PTHR11130:SF0">
    <property type="entry name" value="GLUTATHIONE SYNTHETASE"/>
    <property type="match status" value="1"/>
</dbReference>
<dbReference type="Pfam" id="PF03917">
    <property type="entry name" value="GSH_synth_ATP"/>
    <property type="match status" value="1"/>
</dbReference>
<dbReference type="Pfam" id="PF03199">
    <property type="entry name" value="GSH_synthase"/>
    <property type="match status" value="1"/>
</dbReference>
<dbReference type="PIRSF" id="PIRSF001558">
    <property type="entry name" value="GSHase"/>
    <property type="match status" value="1"/>
</dbReference>
<dbReference type="SUPFAM" id="SSF56059">
    <property type="entry name" value="Glutathione synthetase ATP-binding domain-like"/>
    <property type="match status" value="1"/>
</dbReference>
<dbReference type="SUPFAM" id="SSF52440">
    <property type="entry name" value="PreATP-grasp domain"/>
    <property type="match status" value="1"/>
</dbReference>